<reference key="1">
    <citation type="journal article" date="2010" name="BMC Genomics">
        <title>A genomic perspective on the potential of Actinobacillus succinogenes for industrial succinate production.</title>
        <authorList>
            <person name="McKinlay J.B."/>
            <person name="Laivenieks M."/>
            <person name="Schindler B.D."/>
            <person name="McKinlay A.A."/>
            <person name="Siddaramappa S."/>
            <person name="Challacombe J.F."/>
            <person name="Lowry S.R."/>
            <person name="Clum A."/>
            <person name="Lapidus A.L."/>
            <person name="Burkhart K.B."/>
            <person name="Harkins V."/>
            <person name="Vieille C."/>
        </authorList>
    </citation>
    <scope>NUCLEOTIDE SEQUENCE [LARGE SCALE GENOMIC DNA]</scope>
    <source>
        <strain>ATCC 55618 / DSM 22257 / CCUG 43843 / 130Z</strain>
    </source>
</reference>
<comment type="function">
    <text evidence="1">Catalyzes the transfer of the phosphoribosyl group of 5-phosphorylribose-1-pyrophosphate (PRPP) to anthranilate to yield N-(5'-phosphoribosyl)-anthranilate (PRA).</text>
</comment>
<comment type="catalytic activity">
    <reaction evidence="1">
        <text>N-(5-phospho-beta-D-ribosyl)anthranilate + diphosphate = 5-phospho-alpha-D-ribose 1-diphosphate + anthranilate</text>
        <dbReference type="Rhea" id="RHEA:11768"/>
        <dbReference type="ChEBI" id="CHEBI:16567"/>
        <dbReference type="ChEBI" id="CHEBI:18277"/>
        <dbReference type="ChEBI" id="CHEBI:33019"/>
        <dbReference type="ChEBI" id="CHEBI:58017"/>
        <dbReference type="EC" id="2.4.2.18"/>
    </reaction>
</comment>
<comment type="cofactor">
    <cofactor evidence="1">
        <name>Mg(2+)</name>
        <dbReference type="ChEBI" id="CHEBI:18420"/>
    </cofactor>
    <text evidence="1">Binds 2 magnesium ions per monomer.</text>
</comment>
<comment type="pathway">
    <text evidence="1">Amino-acid biosynthesis; L-tryptophan biosynthesis; L-tryptophan from chorismate: step 2/5.</text>
</comment>
<comment type="subunit">
    <text evidence="1">Homodimer.</text>
</comment>
<comment type="similarity">
    <text evidence="1">Belongs to the anthranilate phosphoribosyltransferase family.</text>
</comment>
<dbReference type="EC" id="2.4.2.18" evidence="1"/>
<dbReference type="EMBL" id="CP000746">
    <property type="protein sequence ID" value="ABR74630.1"/>
    <property type="molecule type" value="Genomic_DNA"/>
</dbReference>
<dbReference type="RefSeq" id="WP_012073007.1">
    <property type="nucleotide sequence ID" value="NC_009655.1"/>
</dbReference>
<dbReference type="SMR" id="A6VNT3"/>
<dbReference type="STRING" id="339671.Asuc_1270"/>
<dbReference type="KEGG" id="asu:Asuc_1270"/>
<dbReference type="eggNOG" id="COG0547">
    <property type="taxonomic scope" value="Bacteria"/>
</dbReference>
<dbReference type="HOGENOM" id="CLU_034315_2_1_6"/>
<dbReference type="OrthoDB" id="9806430at2"/>
<dbReference type="UniPathway" id="UPA00035">
    <property type="reaction ID" value="UER00041"/>
</dbReference>
<dbReference type="Proteomes" id="UP000001114">
    <property type="component" value="Chromosome"/>
</dbReference>
<dbReference type="GO" id="GO:0005829">
    <property type="term" value="C:cytosol"/>
    <property type="evidence" value="ECO:0007669"/>
    <property type="project" value="TreeGrafter"/>
</dbReference>
<dbReference type="GO" id="GO:0004048">
    <property type="term" value="F:anthranilate phosphoribosyltransferase activity"/>
    <property type="evidence" value="ECO:0007669"/>
    <property type="project" value="UniProtKB-UniRule"/>
</dbReference>
<dbReference type="GO" id="GO:0000287">
    <property type="term" value="F:magnesium ion binding"/>
    <property type="evidence" value="ECO:0007669"/>
    <property type="project" value="UniProtKB-UniRule"/>
</dbReference>
<dbReference type="GO" id="GO:0000162">
    <property type="term" value="P:L-tryptophan biosynthetic process"/>
    <property type="evidence" value="ECO:0007669"/>
    <property type="project" value="UniProtKB-UniRule"/>
</dbReference>
<dbReference type="FunFam" id="3.40.1030.10:FF:000002">
    <property type="entry name" value="Anthranilate phosphoribosyltransferase"/>
    <property type="match status" value="1"/>
</dbReference>
<dbReference type="Gene3D" id="3.40.1030.10">
    <property type="entry name" value="Nucleoside phosphorylase/phosphoribosyltransferase catalytic domain"/>
    <property type="match status" value="1"/>
</dbReference>
<dbReference type="Gene3D" id="1.20.970.10">
    <property type="entry name" value="Transferase, Pyrimidine Nucleoside Phosphorylase, Chain C"/>
    <property type="match status" value="1"/>
</dbReference>
<dbReference type="HAMAP" id="MF_00211">
    <property type="entry name" value="TrpD"/>
    <property type="match status" value="1"/>
</dbReference>
<dbReference type="InterPro" id="IPR005940">
    <property type="entry name" value="Anthranilate_Pribosyl_Tfrase"/>
</dbReference>
<dbReference type="InterPro" id="IPR000312">
    <property type="entry name" value="Glycosyl_Trfase_fam3"/>
</dbReference>
<dbReference type="InterPro" id="IPR017459">
    <property type="entry name" value="Glycosyl_Trfase_fam3_N_dom"/>
</dbReference>
<dbReference type="InterPro" id="IPR036320">
    <property type="entry name" value="Glycosyl_Trfase_fam3_N_dom_sf"/>
</dbReference>
<dbReference type="InterPro" id="IPR035902">
    <property type="entry name" value="Nuc_phospho_transferase"/>
</dbReference>
<dbReference type="NCBIfam" id="TIGR01245">
    <property type="entry name" value="trpD"/>
    <property type="match status" value="1"/>
</dbReference>
<dbReference type="PANTHER" id="PTHR43285">
    <property type="entry name" value="ANTHRANILATE PHOSPHORIBOSYLTRANSFERASE"/>
    <property type="match status" value="1"/>
</dbReference>
<dbReference type="PANTHER" id="PTHR43285:SF2">
    <property type="entry name" value="ANTHRANILATE PHOSPHORIBOSYLTRANSFERASE"/>
    <property type="match status" value="1"/>
</dbReference>
<dbReference type="Pfam" id="PF02885">
    <property type="entry name" value="Glycos_trans_3N"/>
    <property type="match status" value="1"/>
</dbReference>
<dbReference type="Pfam" id="PF00591">
    <property type="entry name" value="Glycos_transf_3"/>
    <property type="match status" value="1"/>
</dbReference>
<dbReference type="SUPFAM" id="SSF52418">
    <property type="entry name" value="Nucleoside phosphorylase/phosphoribosyltransferase catalytic domain"/>
    <property type="match status" value="1"/>
</dbReference>
<dbReference type="SUPFAM" id="SSF47648">
    <property type="entry name" value="Nucleoside phosphorylase/phosphoribosyltransferase N-terminal domain"/>
    <property type="match status" value="1"/>
</dbReference>
<sequence>MRLDQIFATLFNNQPLTQEQSAEFFRAVVNGEVAPEQLSAALIALKLRGETIDEIAGAVTALLTAAQPFPAPDYPFADIVGTGGDGANTINISTASAIVGASLGLKIAKHGNRSVSSKTGASDLLSCLGVDINMSAENARQALDEIGLAFVFAQKYHTGFKHAVPVRQALKTRTIFNILGPLINPAHAKRQLLGVYSPELLKPYAQTNARLNREHSIIVHGSGLDEVAIHGKTQVAELRDGKIEYYELSPQDFGFDVKPLENLRGGEPRENAEIITALLQGRGTDEQNQAVAMNTALLMKLFGHENIKQNAEQVLAQLASGRAFDTLVKLTAY</sequence>
<name>TRPD_ACTSZ</name>
<feature type="chain" id="PRO_1000071742" description="Anthranilate phosphoribosyltransferase">
    <location>
        <begin position="1"/>
        <end position="333"/>
    </location>
</feature>
<feature type="binding site" evidence="1">
    <location>
        <position position="81"/>
    </location>
    <ligand>
        <name>5-phospho-alpha-D-ribose 1-diphosphate</name>
        <dbReference type="ChEBI" id="CHEBI:58017"/>
    </ligand>
</feature>
<feature type="binding site" evidence="1">
    <location>
        <position position="81"/>
    </location>
    <ligand>
        <name>anthranilate</name>
        <dbReference type="ChEBI" id="CHEBI:16567"/>
        <label>1</label>
    </ligand>
</feature>
<feature type="binding site" evidence="1">
    <location>
        <begin position="84"/>
        <end position="85"/>
    </location>
    <ligand>
        <name>5-phospho-alpha-D-ribose 1-diphosphate</name>
        <dbReference type="ChEBI" id="CHEBI:58017"/>
    </ligand>
</feature>
<feature type="binding site" evidence="1">
    <location>
        <position position="89"/>
    </location>
    <ligand>
        <name>5-phospho-alpha-D-ribose 1-diphosphate</name>
        <dbReference type="ChEBI" id="CHEBI:58017"/>
    </ligand>
</feature>
<feature type="binding site" evidence="1">
    <location>
        <begin position="91"/>
        <end position="94"/>
    </location>
    <ligand>
        <name>5-phospho-alpha-D-ribose 1-diphosphate</name>
        <dbReference type="ChEBI" id="CHEBI:58017"/>
    </ligand>
</feature>
<feature type="binding site" evidence="1">
    <location>
        <position position="93"/>
    </location>
    <ligand>
        <name>Mg(2+)</name>
        <dbReference type="ChEBI" id="CHEBI:18420"/>
        <label>1</label>
    </ligand>
</feature>
<feature type="binding site" evidence="1">
    <location>
        <begin position="109"/>
        <end position="117"/>
    </location>
    <ligand>
        <name>5-phospho-alpha-D-ribose 1-diphosphate</name>
        <dbReference type="ChEBI" id="CHEBI:58017"/>
    </ligand>
</feature>
<feature type="binding site" evidence="1">
    <location>
        <position position="112"/>
    </location>
    <ligand>
        <name>anthranilate</name>
        <dbReference type="ChEBI" id="CHEBI:16567"/>
        <label>1</label>
    </ligand>
</feature>
<feature type="binding site" evidence="1">
    <location>
        <position position="121"/>
    </location>
    <ligand>
        <name>5-phospho-alpha-D-ribose 1-diphosphate</name>
        <dbReference type="ChEBI" id="CHEBI:58017"/>
    </ligand>
</feature>
<feature type="binding site" evidence="1">
    <location>
        <position position="167"/>
    </location>
    <ligand>
        <name>anthranilate</name>
        <dbReference type="ChEBI" id="CHEBI:16567"/>
        <label>2</label>
    </ligand>
</feature>
<feature type="binding site" evidence="1">
    <location>
        <position position="225"/>
    </location>
    <ligand>
        <name>Mg(2+)</name>
        <dbReference type="ChEBI" id="CHEBI:18420"/>
        <label>2</label>
    </ligand>
</feature>
<feature type="binding site" evidence="1">
    <location>
        <position position="226"/>
    </location>
    <ligand>
        <name>Mg(2+)</name>
        <dbReference type="ChEBI" id="CHEBI:18420"/>
        <label>1</label>
    </ligand>
</feature>
<feature type="binding site" evidence="1">
    <location>
        <position position="226"/>
    </location>
    <ligand>
        <name>Mg(2+)</name>
        <dbReference type="ChEBI" id="CHEBI:18420"/>
        <label>2</label>
    </ligand>
</feature>
<gene>
    <name evidence="1" type="primary">trpD</name>
    <name type="ordered locus">Asuc_1270</name>
</gene>
<accession>A6VNT3</accession>
<protein>
    <recommendedName>
        <fullName evidence="1">Anthranilate phosphoribosyltransferase</fullName>
        <ecNumber evidence="1">2.4.2.18</ecNumber>
    </recommendedName>
</protein>
<keyword id="KW-0028">Amino-acid biosynthesis</keyword>
<keyword id="KW-0057">Aromatic amino acid biosynthesis</keyword>
<keyword id="KW-0328">Glycosyltransferase</keyword>
<keyword id="KW-0460">Magnesium</keyword>
<keyword id="KW-0479">Metal-binding</keyword>
<keyword id="KW-1185">Reference proteome</keyword>
<keyword id="KW-0808">Transferase</keyword>
<keyword id="KW-0822">Tryptophan biosynthesis</keyword>
<proteinExistence type="inferred from homology"/>
<evidence type="ECO:0000255" key="1">
    <source>
        <dbReference type="HAMAP-Rule" id="MF_00211"/>
    </source>
</evidence>
<organism>
    <name type="scientific">Actinobacillus succinogenes (strain ATCC 55618 / DSM 22257 / CCUG 43843 / 130Z)</name>
    <dbReference type="NCBI Taxonomy" id="339671"/>
    <lineage>
        <taxon>Bacteria</taxon>
        <taxon>Pseudomonadati</taxon>
        <taxon>Pseudomonadota</taxon>
        <taxon>Gammaproteobacteria</taxon>
        <taxon>Pasteurellales</taxon>
        <taxon>Pasteurellaceae</taxon>
        <taxon>Actinobacillus</taxon>
    </lineage>
</organism>